<sequence>MVRPVFDAAVLSGRSDIPSQFIWPEGESPTPDAAEELHVPLINIGGMLSGDAAAAAEVTRLVGEACERHGFFQVVNHGIDAELLADAHRCVDNFFTMPLPEKQRALRRPGESCGYASSFTGRFASKLPWKETLSFRSCPSDPALVVDYIVATLGEDHRRLGEVYARYCSEMSRLSLEIMEVLGESLGVGRAHYRRFFEGNDSIMRLNYYPPCQRPLETLGTGPHCDPTSLTILHQDNVGGLQVHTEGRWRSIRPRADAFVVNIGDTFMALSNGRYKSCLHRAVVNSRVPRKSLAFFLCPEMDKVVAPPGTLVDASNPRAYPDFTWRSLLDFTQKHYRADMKTLEVFSSWIVQQQQGQLALQPAMT</sequence>
<gene>
    <name type="primary">GA20ox1A</name>
</gene>
<protein>
    <recommendedName>
        <fullName>Gibberellin 20 oxidase 1-A</fullName>
        <ecNumber evidence="2">1.14.11.-</ecNumber>
    </recommendedName>
    <alternativeName>
        <fullName>GA 20-oxidase 1-A</fullName>
    </alternativeName>
    <alternativeName>
        <fullName>Gibberellin C-20 oxidase 1-B</fullName>
    </alternativeName>
    <alternativeName>
        <fullName>TaGA20ox1-A</fullName>
        <shortName>Ta20ox1A</shortName>
    </alternativeName>
</protein>
<dbReference type="EC" id="1.14.11.-" evidence="2"/>
<dbReference type="EMBL" id="Y14009">
    <property type="protein sequence ID" value="CAA74332.1"/>
    <property type="molecule type" value="mRNA"/>
</dbReference>
<dbReference type="PIR" id="T06991">
    <property type="entry name" value="T06991"/>
</dbReference>
<dbReference type="SMR" id="O04707"/>
<dbReference type="STRING" id="4565.O04707"/>
<dbReference type="PaxDb" id="4565-Traes_4AL_FABDF4EDA.1"/>
<dbReference type="EnsemblPlants" id="TraesARI4A03G02191690.1">
    <property type="protein sequence ID" value="TraesARI4A03G02191690.1"/>
    <property type="gene ID" value="TraesARI4A03G02191690"/>
</dbReference>
<dbReference type="EnsemblPlants" id="TraesCAD_scaffold_003406_01G000100.1">
    <property type="protein sequence ID" value="TraesCAD_scaffold_003406_01G000100.1"/>
    <property type="gene ID" value="TraesCAD_scaffold_003406_01G000100"/>
</dbReference>
<dbReference type="EnsemblPlants" id="TraesCLE_scaffold_038003_01G000100.1">
    <property type="protein sequence ID" value="TraesCLE_scaffold_038003_01G000100.1"/>
    <property type="gene ID" value="TraesCLE_scaffold_038003_01G000100"/>
</dbReference>
<dbReference type="EnsemblPlants" id="TraesCS4A02G319100.1">
    <property type="protein sequence ID" value="TraesCS4A02G319100.1"/>
    <property type="gene ID" value="TraesCS4A02G319100"/>
</dbReference>
<dbReference type="EnsemblPlants" id="TraesCS4A03G0796400.1">
    <property type="protein sequence ID" value="TraesCS4A03G0796400.1.CDS"/>
    <property type="gene ID" value="TraesCS4A03G0796400"/>
</dbReference>
<dbReference type="EnsemblPlants" id="TraesJAG4A03G02154190.1">
    <property type="protein sequence ID" value="TraesJAG4A03G02154190.1"/>
    <property type="gene ID" value="TraesJAG4A03G02154190"/>
</dbReference>
<dbReference type="EnsemblPlants" id="TraesJUL4A03G02173590.1">
    <property type="protein sequence ID" value="TraesJUL4A03G02173590.1"/>
    <property type="gene ID" value="TraesJUL4A03G02173590"/>
</dbReference>
<dbReference type="EnsemblPlants" id="TraesKAR4A01G0376150.1">
    <property type="protein sequence ID" value="cds.TraesKAR4A01G0376150.1"/>
    <property type="gene ID" value="TraesKAR4A01G0376150"/>
</dbReference>
<dbReference type="EnsemblPlants" id="TraesLAC4A03G02106770.1">
    <property type="protein sequence ID" value="TraesLAC4A03G02106770.1"/>
    <property type="gene ID" value="TraesLAC4A03G02106770"/>
</dbReference>
<dbReference type="EnsemblPlants" id="TraesLDM4A03G02152550.1">
    <property type="protein sequence ID" value="TraesLDM4A03G02152550.1"/>
    <property type="gene ID" value="TraesLDM4A03G02152550"/>
</dbReference>
<dbReference type="EnsemblPlants" id="TraesMAC4A03G02152200.1">
    <property type="protein sequence ID" value="TraesMAC4A03G02152200.1"/>
    <property type="gene ID" value="TraesMAC4A03G02152200"/>
</dbReference>
<dbReference type="EnsemblPlants" id="TraesNOR4A03G02175620.1">
    <property type="protein sequence ID" value="TraesNOR4A03G02175620.1"/>
    <property type="gene ID" value="TraesNOR4A03G02175620"/>
</dbReference>
<dbReference type="EnsemblPlants" id="TraesPARA_EIv1.0_1230640.1">
    <property type="protein sequence ID" value="TraesPARA_EIv1.0_1230640.1.CDS"/>
    <property type="gene ID" value="TraesPARA_EIv1.0_1230640"/>
</dbReference>
<dbReference type="EnsemblPlants" id="TraesROB_scaffold_001542_01G000100.1">
    <property type="protein sequence ID" value="TraesROB_scaffold_001542_01G000100.1"/>
    <property type="gene ID" value="TraesROB_scaffold_001542_01G000100"/>
</dbReference>
<dbReference type="EnsemblPlants" id="TraesSTA4A03G02153990.1">
    <property type="protein sequence ID" value="TraesSTA4A03G02153990.1"/>
    <property type="gene ID" value="TraesSTA4A03G02153990"/>
</dbReference>
<dbReference type="EnsemblPlants" id="TraesSYM4A03G02180820.1">
    <property type="protein sequence ID" value="TraesSYM4A03G02180820.1"/>
    <property type="gene ID" value="TraesSYM4A03G02180820"/>
</dbReference>
<dbReference type="EnsemblPlants" id="TraesWEE_scaffold_032953_01G000100.1">
    <property type="protein sequence ID" value="TraesWEE_scaffold_032953_01G000100.1"/>
    <property type="gene ID" value="TraesWEE_scaffold_032953_01G000100"/>
</dbReference>
<dbReference type="Gramene" id="TraesARI4A03G02191690.1">
    <property type="protein sequence ID" value="TraesARI4A03G02191690.1"/>
    <property type="gene ID" value="TraesARI4A03G02191690"/>
</dbReference>
<dbReference type="Gramene" id="TraesCAD_scaffold_003406_01G000100.1">
    <property type="protein sequence ID" value="TraesCAD_scaffold_003406_01G000100.1"/>
    <property type="gene ID" value="TraesCAD_scaffold_003406_01G000100"/>
</dbReference>
<dbReference type="Gramene" id="TraesCLE_scaffold_038003_01G000100.1">
    <property type="protein sequence ID" value="TraesCLE_scaffold_038003_01G000100.1"/>
    <property type="gene ID" value="TraesCLE_scaffold_038003_01G000100"/>
</dbReference>
<dbReference type="Gramene" id="TraesCS4A02G319100.1">
    <property type="protein sequence ID" value="TraesCS4A02G319100.1"/>
    <property type="gene ID" value="TraesCS4A02G319100"/>
</dbReference>
<dbReference type="Gramene" id="TraesCS4A03G0796400.1">
    <property type="protein sequence ID" value="TraesCS4A03G0796400.1.CDS"/>
    <property type="gene ID" value="TraesCS4A03G0796400"/>
</dbReference>
<dbReference type="Gramene" id="TraesJAG4A03G02154190.1">
    <property type="protein sequence ID" value="TraesJAG4A03G02154190.1"/>
    <property type="gene ID" value="TraesJAG4A03G02154190"/>
</dbReference>
<dbReference type="Gramene" id="TraesJUL4A03G02173590.1">
    <property type="protein sequence ID" value="TraesJUL4A03G02173590.1"/>
    <property type="gene ID" value="TraesJUL4A03G02173590"/>
</dbReference>
<dbReference type="Gramene" id="TraesKAR4A01G0376150.1">
    <property type="protein sequence ID" value="cds.TraesKAR4A01G0376150.1"/>
    <property type="gene ID" value="TraesKAR4A01G0376150"/>
</dbReference>
<dbReference type="Gramene" id="TraesLAC4A03G02106770.1">
    <property type="protein sequence ID" value="TraesLAC4A03G02106770.1"/>
    <property type="gene ID" value="TraesLAC4A03G02106770"/>
</dbReference>
<dbReference type="Gramene" id="TraesLDM4A03G02152550.1">
    <property type="protein sequence ID" value="TraesLDM4A03G02152550.1"/>
    <property type="gene ID" value="TraesLDM4A03G02152550"/>
</dbReference>
<dbReference type="Gramene" id="TraesMAC4A03G02152200.1">
    <property type="protein sequence ID" value="TraesMAC4A03G02152200.1"/>
    <property type="gene ID" value="TraesMAC4A03G02152200"/>
</dbReference>
<dbReference type="Gramene" id="TraesNOR4A03G02175620.1">
    <property type="protein sequence ID" value="TraesNOR4A03G02175620.1"/>
    <property type="gene ID" value="TraesNOR4A03G02175620"/>
</dbReference>
<dbReference type="Gramene" id="TraesPARA_EIv1.0_1230640.1">
    <property type="protein sequence ID" value="TraesPARA_EIv1.0_1230640.1.CDS"/>
    <property type="gene ID" value="TraesPARA_EIv1.0_1230640"/>
</dbReference>
<dbReference type="Gramene" id="TraesROB_scaffold_001542_01G000100.1">
    <property type="protein sequence ID" value="TraesROB_scaffold_001542_01G000100.1"/>
    <property type="gene ID" value="TraesROB_scaffold_001542_01G000100"/>
</dbReference>
<dbReference type="Gramene" id="TraesSTA4A03G02153990.1">
    <property type="protein sequence ID" value="TraesSTA4A03G02153990.1"/>
    <property type="gene ID" value="TraesSTA4A03G02153990"/>
</dbReference>
<dbReference type="Gramene" id="TraesSYM4A03G02180820.1">
    <property type="protein sequence ID" value="TraesSYM4A03G02180820.1"/>
    <property type="gene ID" value="TraesSYM4A03G02180820"/>
</dbReference>
<dbReference type="Gramene" id="TraesWEE_scaffold_032953_01G000100.1">
    <property type="protein sequence ID" value="TraesWEE_scaffold_032953_01G000100.1"/>
    <property type="gene ID" value="TraesWEE_scaffold_032953_01G000100"/>
</dbReference>
<dbReference type="eggNOG" id="KOG0143">
    <property type="taxonomic scope" value="Eukaryota"/>
</dbReference>
<dbReference type="HOGENOM" id="CLU_010119_16_3_1"/>
<dbReference type="OMA" id="SQFIWPA"/>
<dbReference type="OrthoDB" id="288590at2759"/>
<dbReference type="BioCyc" id="MetaCyc:MONOMER-11642"/>
<dbReference type="Proteomes" id="UP000019116">
    <property type="component" value="Chromosome 4A"/>
</dbReference>
<dbReference type="ExpressionAtlas" id="O04707">
    <property type="expression patterns" value="baseline and differential"/>
</dbReference>
<dbReference type="GO" id="GO:0045544">
    <property type="term" value="F:gibberellin 20-oxidase activity"/>
    <property type="evidence" value="ECO:0000318"/>
    <property type="project" value="GO_Central"/>
</dbReference>
<dbReference type="GO" id="GO:0046872">
    <property type="term" value="F:metal ion binding"/>
    <property type="evidence" value="ECO:0007669"/>
    <property type="project" value="UniProtKB-KW"/>
</dbReference>
<dbReference type="GO" id="GO:0009908">
    <property type="term" value="P:flower development"/>
    <property type="evidence" value="ECO:0000318"/>
    <property type="project" value="GO_Central"/>
</dbReference>
<dbReference type="GO" id="GO:0009686">
    <property type="term" value="P:gibberellin biosynthetic process"/>
    <property type="evidence" value="ECO:0000318"/>
    <property type="project" value="GO_Central"/>
</dbReference>
<dbReference type="GO" id="GO:0009416">
    <property type="term" value="P:response to light stimulus"/>
    <property type="evidence" value="ECO:0000318"/>
    <property type="project" value="GO_Central"/>
</dbReference>
<dbReference type="GO" id="GO:0009826">
    <property type="term" value="P:unidimensional cell growth"/>
    <property type="evidence" value="ECO:0000318"/>
    <property type="project" value="GO_Central"/>
</dbReference>
<dbReference type="FunFam" id="2.60.120.330:FF:000003">
    <property type="entry name" value="Gibberellin 20 oxidase 2"/>
    <property type="match status" value="1"/>
</dbReference>
<dbReference type="Gene3D" id="2.60.120.330">
    <property type="entry name" value="B-lactam Antibiotic, Isopenicillin N Synthase, Chain"/>
    <property type="match status" value="1"/>
</dbReference>
<dbReference type="InterPro" id="IPR026992">
    <property type="entry name" value="DIOX_N"/>
</dbReference>
<dbReference type="InterPro" id="IPR044861">
    <property type="entry name" value="IPNS-like_FE2OG_OXY"/>
</dbReference>
<dbReference type="InterPro" id="IPR027443">
    <property type="entry name" value="IPNS-like_sf"/>
</dbReference>
<dbReference type="InterPro" id="IPR050231">
    <property type="entry name" value="Iron_ascorbate_oxido_reductase"/>
</dbReference>
<dbReference type="InterPro" id="IPR005123">
    <property type="entry name" value="Oxoglu/Fe-dep_dioxygenase_dom"/>
</dbReference>
<dbReference type="PANTHER" id="PTHR47990">
    <property type="entry name" value="2-OXOGLUTARATE (2OG) AND FE(II)-DEPENDENT OXYGENASE SUPERFAMILY PROTEIN-RELATED"/>
    <property type="match status" value="1"/>
</dbReference>
<dbReference type="Pfam" id="PF03171">
    <property type="entry name" value="2OG-FeII_Oxy"/>
    <property type="match status" value="1"/>
</dbReference>
<dbReference type="Pfam" id="PF14226">
    <property type="entry name" value="DIOX_N"/>
    <property type="match status" value="1"/>
</dbReference>
<dbReference type="SUPFAM" id="SSF51197">
    <property type="entry name" value="Clavaminate synthase-like"/>
    <property type="match status" value="1"/>
</dbReference>
<dbReference type="PROSITE" id="PS51471">
    <property type="entry name" value="FE2OG_OXY"/>
    <property type="match status" value="1"/>
</dbReference>
<reference key="1">
    <citation type="journal article" date="2006" name="Planta">
        <title>Function and transcript analysis of gibberellin-biosynthetic enzymes in wheat.</title>
        <authorList>
            <person name="Appleford N.E."/>
            <person name="Evans D.J."/>
            <person name="Lenton J.R."/>
            <person name="Gaskin P."/>
            <person name="Croker S.J."/>
            <person name="Devos K.M."/>
            <person name="Phillips A.L."/>
            <person name="Hedden P."/>
        </authorList>
    </citation>
    <scope>NUCLEOTIDE SEQUENCE [MRNA]</scope>
    <scope>TISSUE SPECIFICITY</scope>
    <scope>DEVELOPMENTAL STAGE</scope>
    <scope>FUNCTION</scope>
    <source>
        <strain>cv. Maris Huntsman</strain>
        <tissue>Scutellum</tissue>
    </source>
</reference>
<comment type="function">
    <text evidence="5">Key oxidase enzyme in the biosynthesis of gibberellin that catalyzes the conversion of GA12 and GA53 to GA9 and GA20 respectively, via a three-step oxidation at C-20 of the GA skeleton.</text>
</comment>
<comment type="catalytic activity">
    <reaction evidence="2">
        <text>gibberellin A12 + 2 2-oxoglutarate + 3 O2 + H(+) = gibberellin A9 + 2 succinate + 3 CO2 + 2 H2O</text>
        <dbReference type="Rhea" id="RHEA:60772"/>
        <dbReference type="ChEBI" id="CHEBI:15377"/>
        <dbReference type="ChEBI" id="CHEBI:15378"/>
        <dbReference type="ChEBI" id="CHEBI:15379"/>
        <dbReference type="ChEBI" id="CHEBI:16526"/>
        <dbReference type="ChEBI" id="CHEBI:16810"/>
        <dbReference type="ChEBI" id="CHEBI:30031"/>
        <dbReference type="ChEBI" id="CHEBI:58627"/>
        <dbReference type="ChEBI" id="CHEBI:73255"/>
    </reaction>
    <physiologicalReaction direction="left-to-right" evidence="2">
        <dbReference type="Rhea" id="RHEA:60773"/>
    </physiologicalReaction>
</comment>
<comment type="catalytic activity">
    <reaction evidence="2">
        <text>gibberellin A53 + 2 2-oxoglutarate + 3 O2 + H(+) = gibberellin A20 + 2 succinate + 3 CO2 + 2 H2O</text>
        <dbReference type="Rhea" id="RHEA:60796"/>
        <dbReference type="ChEBI" id="CHEBI:15377"/>
        <dbReference type="ChEBI" id="CHEBI:15378"/>
        <dbReference type="ChEBI" id="CHEBI:15379"/>
        <dbReference type="ChEBI" id="CHEBI:16526"/>
        <dbReference type="ChEBI" id="CHEBI:16810"/>
        <dbReference type="ChEBI" id="CHEBI:30031"/>
        <dbReference type="ChEBI" id="CHEBI:58526"/>
        <dbReference type="ChEBI" id="CHEBI:143954"/>
    </reaction>
    <physiologicalReaction direction="left-to-right" evidence="2">
        <dbReference type="Rhea" id="RHEA:60797"/>
    </physiologicalReaction>
</comment>
<comment type="cofactor">
    <cofactor evidence="1">
        <name>Fe cation</name>
        <dbReference type="ChEBI" id="CHEBI:24875"/>
    </cofactor>
</comment>
<comment type="cofactor">
    <cofactor evidence="1">
        <name>L-ascorbate</name>
        <dbReference type="ChEBI" id="CHEBI:38290"/>
    </cofactor>
</comment>
<comment type="tissue specificity">
    <text evidence="5">Expressed in nodes and the ear of the elongating stem.</text>
</comment>
<comment type="developmental stage">
    <text evidence="5">Highly expressed in the embryo and the surrounding maternal tissues, the pericarp and the integuments. Also found in the germinating grain.</text>
</comment>
<comment type="similarity">
    <text evidence="6">Belongs to the iron/ascorbate-dependent oxidoreductase family. GA20OX subfamily.</text>
</comment>
<evidence type="ECO:0000250" key="1"/>
<evidence type="ECO:0000250" key="2">
    <source>
        <dbReference type="UniProtKB" id="O04705"/>
    </source>
</evidence>
<evidence type="ECO:0000255" key="3"/>
<evidence type="ECO:0000255" key="4">
    <source>
        <dbReference type="PROSITE-ProRule" id="PRU00805"/>
    </source>
</evidence>
<evidence type="ECO:0000269" key="5">
    <source>
    </source>
</evidence>
<evidence type="ECO:0000305" key="6"/>
<name>GAO1A_WHEAT</name>
<organism>
    <name type="scientific">Triticum aestivum</name>
    <name type="common">Wheat</name>
    <dbReference type="NCBI Taxonomy" id="4565"/>
    <lineage>
        <taxon>Eukaryota</taxon>
        <taxon>Viridiplantae</taxon>
        <taxon>Streptophyta</taxon>
        <taxon>Embryophyta</taxon>
        <taxon>Tracheophyta</taxon>
        <taxon>Spermatophyta</taxon>
        <taxon>Magnoliopsida</taxon>
        <taxon>Liliopsida</taxon>
        <taxon>Poales</taxon>
        <taxon>Poaceae</taxon>
        <taxon>BOP clade</taxon>
        <taxon>Pooideae</taxon>
        <taxon>Triticodae</taxon>
        <taxon>Triticeae</taxon>
        <taxon>Triticinae</taxon>
        <taxon>Triticum</taxon>
    </lineage>
</organism>
<keyword id="KW-0408">Iron</keyword>
<keyword id="KW-0479">Metal-binding</keyword>
<keyword id="KW-0560">Oxidoreductase</keyword>
<keyword id="KW-1185">Reference proteome</keyword>
<accession>O04707</accession>
<proteinExistence type="evidence at transcript level"/>
<feature type="chain" id="PRO_0000219518" description="Gibberellin 20 oxidase 1-A">
    <location>
        <begin position="1"/>
        <end position="365"/>
    </location>
</feature>
<feature type="domain" description="Fe2OG dioxygenase" evidence="4">
    <location>
        <begin position="199"/>
        <end position="299"/>
    </location>
</feature>
<feature type="active site" evidence="3">
    <location>
        <position position="290"/>
    </location>
</feature>
<feature type="binding site" evidence="4">
    <location>
        <position position="224"/>
    </location>
    <ligand>
        <name>Fe cation</name>
        <dbReference type="ChEBI" id="CHEBI:24875"/>
    </ligand>
</feature>
<feature type="binding site" evidence="4">
    <location>
        <position position="226"/>
    </location>
    <ligand>
        <name>Fe cation</name>
        <dbReference type="ChEBI" id="CHEBI:24875"/>
    </ligand>
</feature>
<feature type="binding site" evidence="4">
    <location>
        <position position="280"/>
    </location>
    <ligand>
        <name>Fe cation</name>
        <dbReference type="ChEBI" id="CHEBI:24875"/>
    </ligand>
</feature>